<feature type="chain" id="PRO_0000055762" description="RING-H2 finger protein ATL80">
    <location>
        <begin position="1"/>
        <end position="197"/>
    </location>
</feature>
<feature type="transmembrane region" description="Helical" evidence="2">
    <location>
        <begin position="30"/>
        <end position="50"/>
    </location>
</feature>
<feature type="zinc finger region" description="RING-type; atypical" evidence="3">
    <location>
        <begin position="111"/>
        <end position="153"/>
    </location>
</feature>
<feature type="region of interest" description="Disordered" evidence="4">
    <location>
        <begin position="168"/>
        <end position="197"/>
    </location>
</feature>
<name>ATL80_ARATH</name>
<reference key="1">
    <citation type="journal article" date="2000" name="Nature">
        <title>Sequence and analysis of chromosome 1 of the plant Arabidopsis thaliana.</title>
        <authorList>
            <person name="Theologis A."/>
            <person name="Ecker J.R."/>
            <person name="Palm C.J."/>
            <person name="Federspiel N.A."/>
            <person name="Kaul S."/>
            <person name="White O."/>
            <person name="Alonso J."/>
            <person name="Altafi H."/>
            <person name="Araujo R."/>
            <person name="Bowman C.L."/>
            <person name="Brooks S.Y."/>
            <person name="Buehler E."/>
            <person name="Chan A."/>
            <person name="Chao Q."/>
            <person name="Chen H."/>
            <person name="Cheuk R.F."/>
            <person name="Chin C.W."/>
            <person name="Chung M.K."/>
            <person name="Conn L."/>
            <person name="Conway A.B."/>
            <person name="Conway A.R."/>
            <person name="Creasy T.H."/>
            <person name="Dewar K."/>
            <person name="Dunn P."/>
            <person name="Etgu P."/>
            <person name="Feldblyum T.V."/>
            <person name="Feng J.-D."/>
            <person name="Fong B."/>
            <person name="Fujii C.Y."/>
            <person name="Gill J.E."/>
            <person name="Goldsmith A.D."/>
            <person name="Haas B."/>
            <person name="Hansen N.F."/>
            <person name="Hughes B."/>
            <person name="Huizar L."/>
            <person name="Hunter J.L."/>
            <person name="Jenkins J."/>
            <person name="Johnson-Hopson C."/>
            <person name="Khan S."/>
            <person name="Khaykin E."/>
            <person name="Kim C.J."/>
            <person name="Koo H.L."/>
            <person name="Kremenetskaia I."/>
            <person name="Kurtz D.B."/>
            <person name="Kwan A."/>
            <person name="Lam B."/>
            <person name="Langin-Hooper S."/>
            <person name="Lee A."/>
            <person name="Lee J.M."/>
            <person name="Lenz C.A."/>
            <person name="Li J.H."/>
            <person name="Li Y.-P."/>
            <person name="Lin X."/>
            <person name="Liu S.X."/>
            <person name="Liu Z.A."/>
            <person name="Luros J.S."/>
            <person name="Maiti R."/>
            <person name="Marziali A."/>
            <person name="Militscher J."/>
            <person name="Miranda M."/>
            <person name="Nguyen M."/>
            <person name="Nierman W.C."/>
            <person name="Osborne B.I."/>
            <person name="Pai G."/>
            <person name="Peterson J."/>
            <person name="Pham P.K."/>
            <person name="Rizzo M."/>
            <person name="Rooney T."/>
            <person name="Rowley D."/>
            <person name="Sakano H."/>
            <person name="Salzberg S.L."/>
            <person name="Schwartz J.R."/>
            <person name="Shinn P."/>
            <person name="Southwick A.M."/>
            <person name="Sun H."/>
            <person name="Tallon L.J."/>
            <person name="Tambunga G."/>
            <person name="Toriumi M.J."/>
            <person name="Town C.D."/>
            <person name="Utterback T."/>
            <person name="Van Aken S."/>
            <person name="Vaysberg M."/>
            <person name="Vysotskaia V.S."/>
            <person name="Walker M."/>
            <person name="Wu D."/>
            <person name="Yu G."/>
            <person name="Fraser C.M."/>
            <person name="Venter J.C."/>
            <person name="Davis R.W."/>
        </authorList>
    </citation>
    <scope>NUCLEOTIDE SEQUENCE [LARGE SCALE GENOMIC DNA]</scope>
    <source>
        <strain>cv. Columbia</strain>
    </source>
</reference>
<reference key="2">
    <citation type="journal article" date="2017" name="Plant J.">
        <title>Araport11: a complete reannotation of the Arabidopsis thaliana reference genome.</title>
        <authorList>
            <person name="Cheng C.Y."/>
            <person name="Krishnakumar V."/>
            <person name="Chan A.P."/>
            <person name="Thibaud-Nissen F."/>
            <person name="Schobel S."/>
            <person name="Town C.D."/>
        </authorList>
    </citation>
    <scope>GENOME REANNOTATION</scope>
    <source>
        <strain>cv. Columbia</strain>
    </source>
</reference>
<reference key="3">
    <citation type="journal article" date="2003" name="Science">
        <title>Empirical analysis of transcriptional activity in the Arabidopsis genome.</title>
        <authorList>
            <person name="Yamada K."/>
            <person name="Lim J."/>
            <person name="Dale J.M."/>
            <person name="Chen H."/>
            <person name="Shinn P."/>
            <person name="Palm C.J."/>
            <person name="Southwick A.M."/>
            <person name="Wu H.C."/>
            <person name="Kim C.J."/>
            <person name="Nguyen M."/>
            <person name="Pham P.K."/>
            <person name="Cheuk R.F."/>
            <person name="Karlin-Newmann G."/>
            <person name="Liu S.X."/>
            <person name="Lam B."/>
            <person name="Sakano H."/>
            <person name="Wu T."/>
            <person name="Yu G."/>
            <person name="Miranda M."/>
            <person name="Quach H.L."/>
            <person name="Tripp M."/>
            <person name="Chang C.H."/>
            <person name="Lee J.M."/>
            <person name="Toriumi M.J."/>
            <person name="Chan M.M."/>
            <person name="Tang C.C."/>
            <person name="Onodera C.S."/>
            <person name="Deng J.M."/>
            <person name="Akiyama K."/>
            <person name="Ansari Y."/>
            <person name="Arakawa T."/>
            <person name="Banh J."/>
            <person name="Banno F."/>
            <person name="Bowser L."/>
            <person name="Brooks S.Y."/>
            <person name="Carninci P."/>
            <person name="Chao Q."/>
            <person name="Choy N."/>
            <person name="Enju A."/>
            <person name="Goldsmith A.D."/>
            <person name="Gurjal M."/>
            <person name="Hansen N.F."/>
            <person name="Hayashizaki Y."/>
            <person name="Johnson-Hopson C."/>
            <person name="Hsuan V.W."/>
            <person name="Iida K."/>
            <person name="Karnes M."/>
            <person name="Khan S."/>
            <person name="Koesema E."/>
            <person name="Ishida J."/>
            <person name="Jiang P.X."/>
            <person name="Jones T."/>
            <person name="Kawai J."/>
            <person name="Kamiya A."/>
            <person name="Meyers C."/>
            <person name="Nakajima M."/>
            <person name="Narusaka M."/>
            <person name="Seki M."/>
            <person name="Sakurai T."/>
            <person name="Satou M."/>
            <person name="Tamse R."/>
            <person name="Vaysberg M."/>
            <person name="Wallender E.K."/>
            <person name="Wong C."/>
            <person name="Yamamura Y."/>
            <person name="Yuan S."/>
            <person name="Shinozaki K."/>
            <person name="Davis R.W."/>
            <person name="Theologis A."/>
            <person name="Ecker J.R."/>
        </authorList>
    </citation>
    <scope>NUCLEOTIDE SEQUENCE [LARGE SCALE MRNA]</scope>
    <source>
        <strain>cv. Columbia</strain>
    </source>
</reference>
<reference key="4">
    <citation type="journal article" date="2002" name="Genome Biol.">
        <title>Evaluation and classification of RING-finger domains encoded by the Arabidopsis genome.</title>
        <authorList>
            <person name="Kosarev P."/>
            <person name="Mayer K.F.X."/>
            <person name="Hardtke C.S."/>
        </authorList>
    </citation>
    <scope>GENE FAMILY ORGANIZATION</scope>
</reference>
<reference key="5">
    <citation type="journal article" date="2006" name="J. Mol. Evol.">
        <title>The ATL gene family from Arabidopsis thaliana and Oryza sativa comprises a large number of putative ubiquitin ligases of the RING-H2 type.</title>
        <authorList>
            <person name="Serrano M."/>
            <person name="Parra S."/>
            <person name="Alcaraz L.D."/>
            <person name="Guzman P."/>
        </authorList>
    </citation>
    <scope>NOMENCLATURE</scope>
    <scope>GENE FAMILY ORGANIZATION</scope>
</reference>
<reference key="6">
    <citation type="journal article" date="2007" name="Mol. Plant Microbe Interact.">
        <title>Identification of 118 Arabidopsis transcription factor and 30 ubiquitin-ligase genes responding to chitin, a plant-defense elicitor.</title>
        <authorList>
            <person name="Libault M."/>
            <person name="Wan J."/>
            <person name="Czechowski T."/>
            <person name="Udvardi M."/>
            <person name="Stacey G."/>
        </authorList>
    </citation>
    <scope>INDUCTION BY CHITIN</scope>
</reference>
<sequence length="197" mass="20920">MARLLFRLLVESNTPSPAIDNSTAALNSDLVVILAALLCALICVLGLIAVSRCVWLRRLAAGNRTVSGSQTQSPQPPVAAANKGLKKKVLQSLPKLTFSPESPESEKFAECAICLAEFSAGDELRVLPQCGHGFHVACIDTWLGSHSSCPSCRQILVVARCHKCGGLPGSSSSGLESEPEIEIRIKQGEDDPNSFLP</sequence>
<keyword id="KW-0472">Membrane</keyword>
<keyword id="KW-0479">Metal-binding</keyword>
<keyword id="KW-0611">Plant defense</keyword>
<keyword id="KW-1185">Reference proteome</keyword>
<keyword id="KW-0808">Transferase</keyword>
<keyword id="KW-0812">Transmembrane</keyword>
<keyword id="KW-1133">Transmembrane helix</keyword>
<keyword id="KW-0833">Ubl conjugation pathway</keyword>
<keyword id="KW-0862">Zinc</keyword>
<keyword id="KW-0863">Zinc-finger</keyword>
<dbReference type="EC" id="2.3.2.27" evidence="6"/>
<dbReference type="EMBL" id="AC069251">
    <property type="protein sequence ID" value="AAF80624.1"/>
    <property type="molecule type" value="Genomic_DNA"/>
</dbReference>
<dbReference type="EMBL" id="CP002684">
    <property type="protein sequence ID" value="AEE30028.1"/>
    <property type="molecule type" value="Genomic_DNA"/>
</dbReference>
<dbReference type="EMBL" id="AY045849">
    <property type="protein sequence ID" value="AAK76523.1"/>
    <property type="molecule type" value="mRNA"/>
</dbReference>
<dbReference type="PIR" id="F86340">
    <property type="entry name" value="F86340"/>
</dbReference>
<dbReference type="RefSeq" id="NP_173506.1">
    <property type="nucleotide sequence ID" value="NM_101935.3"/>
</dbReference>
<dbReference type="SMR" id="Q9LM69"/>
<dbReference type="STRING" id="3702.Q9LM69"/>
<dbReference type="iPTMnet" id="Q9LM69"/>
<dbReference type="PaxDb" id="3702-AT1G20823.1"/>
<dbReference type="ProteomicsDB" id="246650"/>
<dbReference type="EnsemblPlants" id="AT1G20823.1">
    <property type="protein sequence ID" value="AT1G20823.1"/>
    <property type="gene ID" value="AT1G20823"/>
</dbReference>
<dbReference type="GeneID" id="838674"/>
<dbReference type="Gramene" id="AT1G20823.1">
    <property type="protein sequence ID" value="AT1G20823.1"/>
    <property type="gene ID" value="AT1G20823"/>
</dbReference>
<dbReference type="KEGG" id="ath:AT1G20823"/>
<dbReference type="Araport" id="AT1G20823"/>
<dbReference type="TAIR" id="AT1G20823">
    <property type="gene designation" value="ATATL80"/>
</dbReference>
<dbReference type="eggNOG" id="KOG0800">
    <property type="taxonomic scope" value="Eukaryota"/>
</dbReference>
<dbReference type="HOGENOM" id="CLU_013137_9_1_1"/>
<dbReference type="InParanoid" id="Q9LM69"/>
<dbReference type="OMA" id="TYSTETM"/>
<dbReference type="PhylomeDB" id="Q9LM69"/>
<dbReference type="BRENDA" id="2.3.2.27">
    <property type="organism ID" value="399"/>
</dbReference>
<dbReference type="UniPathway" id="UPA00143"/>
<dbReference type="PRO" id="PR:Q9LM69"/>
<dbReference type="Proteomes" id="UP000006548">
    <property type="component" value="Chromosome 1"/>
</dbReference>
<dbReference type="ExpressionAtlas" id="Q9LM69">
    <property type="expression patterns" value="baseline and differential"/>
</dbReference>
<dbReference type="GO" id="GO:0005886">
    <property type="term" value="C:plasma membrane"/>
    <property type="evidence" value="ECO:0000314"/>
    <property type="project" value="TAIR"/>
</dbReference>
<dbReference type="GO" id="GO:0061630">
    <property type="term" value="F:ubiquitin protein ligase activity"/>
    <property type="evidence" value="ECO:0000314"/>
    <property type="project" value="TAIR"/>
</dbReference>
<dbReference type="GO" id="GO:0008270">
    <property type="term" value="F:zinc ion binding"/>
    <property type="evidence" value="ECO:0007669"/>
    <property type="project" value="UniProtKB-KW"/>
</dbReference>
<dbReference type="GO" id="GO:0070417">
    <property type="term" value="P:cellular response to cold"/>
    <property type="evidence" value="ECO:0000315"/>
    <property type="project" value="TAIR"/>
</dbReference>
<dbReference type="GO" id="GO:0006952">
    <property type="term" value="P:defense response"/>
    <property type="evidence" value="ECO:0007669"/>
    <property type="project" value="UniProtKB-KW"/>
</dbReference>
<dbReference type="GO" id="GO:0016567">
    <property type="term" value="P:protein ubiquitination"/>
    <property type="evidence" value="ECO:0007669"/>
    <property type="project" value="UniProtKB-UniPathway"/>
</dbReference>
<dbReference type="GO" id="GO:0009909">
    <property type="term" value="P:regulation of flower development"/>
    <property type="evidence" value="ECO:0000315"/>
    <property type="project" value="TAIR"/>
</dbReference>
<dbReference type="GO" id="GO:0010966">
    <property type="term" value="P:regulation of phosphate transport"/>
    <property type="evidence" value="ECO:0000315"/>
    <property type="project" value="TAIR"/>
</dbReference>
<dbReference type="CDD" id="cd16461">
    <property type="entry name" value="RING-H2_EL5-like"/>
    <property type="match status" value="1"/>
</dbReference>
<dbReference type="FunFam" id="3.30.40.10:FF:000187">
    <property type="entry name" value="E3 ubiquitin-protein ligase ATL6"/>
    <property type="match status" value="1"/>
</dbReference>
<dbReference type="Gene3D" id="3.30.40.10">
    <property type="entry name" value="Zinc/RING finger domain, C3HC4 (zinc finger)"/>
    <property type="match status" value="1"/>
</dbReference>
<dbReference type="InterPro" id="IPR052788">
    <property type="entry name" value="RING-type_E3_ligase_ATL"/>
</dbReference>
<dbReference type="InterPro" id="IPR001841">
    <property type="entry name" value="Znf_RING"/>
</dbReference>
<dbReference type="InterPro" id="IPR013083">
    <property type="entry name" value="Znf_RING/FYVE/PHD"/>
</dbReference>
<dbReference type="PANTHER" id="PTHR45798">
    <property type="entry name" value="RING-H2 FINGER PROTEIN ATL61-RELATED-RELATED"/>
    <property type="match status" value="1"/>
</dbReference>
<dbReference type="PANTHER" id="PTHR45798:SF101">
    <property type="entry name" value="RING-H2 FINGER PROTEIN ATL8-RELATED"/>
    <property type="match status" value="1"/>
</dbReference>
<dbReference type="Pfam" id="PF13639">
    <property type="entry name" value="zf-RING_2"/>
    <property type="match status" value="1"/>
</dbReference>
<dbReference type="SMART" id="SM00184">
    <property type="entry name" value="RING"/>
    <property type="match status" value="1"/>
</dbReference>
<dbReference type="SUPFAM" id="SSF57850">
    <property type="entry name" value="RING/U-box"/>
    <property type="match status" value="1"/>
</dbReference>
<dbReference type="PROSITE" id="PS50089">
    <property type="entry name" value="ZF_RING_2"/>
    <property type="match status" value="1"/>
</dbReference>
<comment type="function">
    <text>May be involved in the early steps of the plant defense signaling pathway.</text>
</comment>
<comment type="catalytic activity">
    <reaction evidence="6">
        <text>S-ubiquitinyl-[E2 ubiquitin-conjugating enzyme]-L-cysteine + [acceptor protein]-L-lysine = [E2 ubiquitin-conjugating enzyme]-L-cysteine + N(6)-ubiquitinyl-[acceptor protein]-L-lysine.</text>
        <dbReference type="EC" id="2.3.2.27"/>
    </reaction>
</comment>
<comment type="pathway">
    <text>Protein modification; protein ubiquitination.</text>
</comment>
<comment type="subcellular location">
    <subcellularLocation>
        <location evidence="6">Membrane</location>
        <topology evidence="6">Single-pass membrane protein</topology>
    </subcellularLocation>
</comment>
<comment type="induction">
    <text evidence="5">Up-regulated by chitin.</text>
</comment>
<comment type="domain">
    <text evidence="1">The RING-type zinc finger domain mediates binding to an E2 ubiquitin-conjugating enzyme.</text>
</comment>
<comment type="similarity">
    <text evidence="6">Belongs to the RING-type zinc finger family. ATL subfamily.</text>
</comment>
<proteinExistence type="evidence at transcript level"/>
<accession>Q9LM69</accession>
<organism>
    <name type="scientific">Arabidopsis thaliana</name>
    <name type="common">Mouse-ear cress</name>
    <dbReference type="NCBI Taxonomy" id="3702"/>
    <lineage>
        <taxon>Eukaryota</taxon>
        <taxon>Viridiplantae</taxon>
        <taxon>Streptophyta</taxon>
        <taxon>Embryophyta</taxon>
        <taxon>Tracheophyta</taxon>
        <taxon>Spermatophyta</taxon>
        <taxon>Magnoliopsida</taxon>
        <taxon>eudicotyledons</taxon>
        <taxon>Gunneridae</taxon>
        <taxon>Pentapetalae</taxon>
        <taxon>rosids</taxon>
        <taxon>malvids</taxon>
        <taxon>Brassicales</taxon>
        <taxon>Brassicaceae</taxon>
        <taxon>Camelineae</taxon>
        <taxon>Arabidopsis</taxon>
    </lineage>
</organism>
<evidence type="ECO:0000250" key="1"/>
<evidence type="ECO:0000255" key="2"/>
<evidence type="ECO:0000255" key="3">
    <source>
        <dbReference type="PROSITE-ProRule" id="PRU00175"/>
    </source>
</evidence>
<evidence type="ECO:0000256" key="4">
    <source>
        <dbReference type="SAM" id="MobiDB-lite"/>
    </source>
</evidence>
<evidence type="ECO:0000269" key="5">
    <source>
    </source>
</evidence>
<evidence type="ECO:0000305" key="6"/>
<gene>
    <name type="primary">ATL80</name>
    <name type="ordered locus">At1g20823</name>
    <name type="ORF">F2D10.34</name>
</gene>
<protein>
    <recommendedName>
        <fullName>RING-H2 finger protein ATL80</fullName>
        <ecNumber evidence="6">2.3.2.27</ecNumber>
    </recommendedName>
    <alternativeName>
        <fullName evidence="6">RING-type E3 ubiquitin transferase ATL80</fullName>
    </alternativeName>
</protein>